<proteinExistence type="inferred from homology"/>
<protein>
    <recommendedName>
        <fullName evidence="1">Endoribonuclease YbeY</fullName>
        <ecNumber evidence="1">3.1.-.-</ecNumber>
    </recommendedName>
</protein>
<organism>
    <name type="scientific">Vibrio campbellii (strain ATCC BAA-1116)</name>
    <dbReference type="NCBI Taxonomy" id="2902295"/>
    <lineage>
        <taxon>Bacteria</taxon>
        <taxon>Pseudomonadati</taxon>
        <taxon>Pseudomonadota</taxon>
        <taxon>Gammaproteobacteria</taxon>
        <taxon>Vibrionales</taxon>
        <taxon>Vibrionaceae</taxon>
        <taxon>Vibrio</taxon>
    </lineage>
</organism>
<reference key="1">
    <citation type="submission" date="2007-08" db="EMBL/GenBank/DDBJ databases">
        <authorList>
            <consortium name="The Vibrio harveyi Genome Sequencing Project"/>
            <person name="Bassler B."/>
            <person name="Clifton S.W."/>
            <person name="Fulton L."/>
            <person name="Delehaunty K."/>
            <person name="Fronick C."/>
            <person name="Harrison M."/>
            <person name="Markivic C."/>
            <person name="Fulton R."/>
            <person name="Tin-Wollam A.-M."/>
            <person name="Shah N."/>
            <person name="Pepin K."/>
            <person name="Nash W."/>
            <person name="Thiruvilangam P."/>
            <person name="Bhonagiri V."/>
            <person name="Waters C."/>
            <person name="Tu K.C."/>
            <person name="Irgon J."/>
            <person name="Wilson R.K."/>
        </authorList>
    </citation>
    <scope>NUCLEOTIDE SEQUENCE [LARGE SCALE GENOMIC DNA]</scope>
    <source>
        <strain>ATCC BAA-1116 / BB120</strain>
    </source>
</reference>
<comment type="function">
    <text evidence="1">Single strand-specific metallo-endoribonuclease involved in late-stage 70S ribosome quality control and in maturation of the 3' terminus of the 16S rRNA.</text>
</comment>
<comment type="cofactor">
    <cofactor evidence="1">
        <name>Zn(2+)</name>
        <dbReference type="ChEBI" id="CHEBI:29105"/>
    </cofactor>
    <text evidence="1">Binds 1 zinc ion.</text>
</comment>
<comment type="subcellular location">
    <subcellularLocation>
        <location evidence="1">Cytoplasm</location>
    </subcellularLocation>
</comment>
<comment type="similarity">
    <text evidence="1">Belongs to the endoribonuclease YbeY family.</text>
</comment>
<dbReference type="EC" id="3.1.-.-" evidence="1"/>
<dbReference type="EMBL" id="CP000789">
    <property type="protein sequence ID" value="ABU70217.1"/>
    <property type="molecule type" value="Genomic_DNA"/>
</dbReference>
<dbReference type="RefSeq" id="WP_005425552.1">
    <property type="nucleotide sequence ID" value="NC_022269.1"/>
</dbReference>
<dbReference type="SMR" id="A7N1G7"/>
<dbReference type="GeneID" id="83582676"/>
<dbReference type="KEGG" id="vha:VIBHAR_01228"/>
<dbReference type="PATRIC" id="fig|338187.25.peg.1402"/>
<dbReference type="Proteomes" id="UP000008152">
    <property type="component" value="Chromosome I"/>
</dbReference>
<dbReference type="GO" id="GO:0005737">
    <property type="term" value="C:cytoplasm"/>
    <property type="evidence" value="ECO:0007669"/>
    <property type="project" value="UniProtKB-SubCell"/>
</dbReference>
<dbReference type="GO" id="GO:0004222">
    <property type="term" value="F:metalloendopeptidase activity"/>
    <property type="evidence" value="ECO:0007669"/>
    <property type="project" value="InterPro"/>
</dbReference>
<dbReference type="GO" id="GO:0004521">
    <property type="term" value="F:RNA endonuclease activity"/>
    <property type="evidence" value="ECO:0007669"/>
    <property type="project" value="UniProtKB-UniRule"/>
</dbReference>
<dbReference type="GO" id="GO:0008270">
    <property type="term" value="F:zinc ion binding"/>
    <property type="evidence" value="ECO:0007669"/>
    <property type="project" value="UniProtKB-UniRule"/>
</dbReference>
<dbReference type="GO" id="GO:0006364">
    <property type="term" value="P:rRNA processing"/>
    <property type="evidence" value="ECO:0007669"/>
    <property type="project" value="UniProtKB-UniRule"/>
</dbReference>
<dbReference type="Gene3D" id="3.40.390.30">
    <property type="entry name" value="Metalloproteases ('zincins'), catalytic domain"/>
    <property type="match status" value="1"/>
</dbReference>
<dbReference type="HAMAP" id="MF_00009">
    <property type="entry name" value="Endoribonucl_YbeY"/>
    <property type="match status" value="1"/>
</dbReference>
<dbReference type="InterPro" id="IPR023091">
    <property type="entry name" value="MetalPrtase_cat_dom_sf_prd"/>
</dbReference>
<dbReference type="InterPro" id="IPR002036">
    <property type="entry name" value="YbeY"/>
</dbReference>
<dbReference type="InterPro" id="IPR020549">
    <property type="entry name" value="YbeY_CS"/>
</dbReference>
<dbReference type="NCBIfam" id="TIGR00043">
    <property type="entry name" value="rRNA maturation RNase YbeY"/>
    <property type="match status" value="1"/>
</dbReference>
<dbReference type="PANTHER" id="PTHR46986">
    <property type="entry name" value="ENDORIBONUCLEASE YBEY, CHLOROPLASTIC"/>
    <property type="match status" value="1"/>
</dbReference>
<dbReference type="PANTHER" id="PTHR46986:SF1">
    <property type="entry name" value="ENDORIBONUCLEASE YBEY, CHLOROPLASTIC"/>
    <property type="match status" value="1"/>
</dbReference>
<dbReference type="Pfam" id="PF02130">
    <property type="entry name" value="YbeY"/>
    <property type="match status" value="1"/>
</dbReference>
<dbReference type="SUPFAM" id="SSF55486">
    <property type="entry name" value="Metalloproteases ('zincins'), catalytic domain"/>
    <property type="match status" value="1"/>
</dbReference>
<dbReference type="PROSITE" id="PS01306">
    <property type="entry name" value="UPF0054"/>
    <property type="match status" value="1"/>
</dbReference>
<gene>
    <name evidence="1" type="primary">ybeY</name>
    <name type="ordered locus">VIBHAR_01228</name>
</gene>
<name>YBEY_VIBC1</name>
<feature type="chain" id="PRO_1000000753" description="Endoribonuclease YbeY">
    <location>
        <begin position="1"/>
        <end position="154"/>
    </location>
</feature>
<feature type="binding site" evidence="1">
    <location>
        <position position="113"/>
    </location>
    <ligand>
        <name>Zn(2+)</name>
        <dbReference type="ChEBI" id="CHEBI:29105"/>
        <note>catalytic</note>
    </ligand>
</feature>
<feature type="binding site" evidence="1">
    <location>
        <position position="117"/>
    </location>
    <ligand>
        <name>Zn(2+)</name>
        <dbReference type="ChEBI" id="CHEBI:29105"/>
        <note>catalytic</note>
    </ligand>
</feature>
<feature type="binding site" evidence="1">
    <location>
        <position position="123"/>
    </location>
    <ligand>
        <name>Zn(2+)</name>
        <dbReference type="ChEBI" id="CHEBI:29105"/>
        <note>catalytic</note>
    </ligand>
</feature>
<keyword id="KW-0963">Cytoplasm</keyword>
<keyword id="KW-0255">Endonuclease</keyword>
<keyword id="KW-0378">Hydrolase</keyword>
<keyword id="KW-0479">Metal-binding</keyword>
<keyword id="KW-0540">Nuclease</keyword>
<keyword id="KW-0690">Ribosome biogenesis</keyword>
<keyword id="KW-0698">rRNA processing</keyword>
<keyword id="KW-0862">Zinc</keyword>
<sequence length="154" mass="17754">MAIELDLQLAVENEEGLPSEQDFQLWLDKTIPLFQPQAELTIRIVDEQESHELNHEYRGKDKPTNVLSFPFEVPPGMEMDLLGDLIICRQVVEKEAVEQNKPLLAHWAHMVVHGSLHLLGYDHIEDDEAEEMESLETEIMQGMGYEDPYIAEKE</sequence>
<evidence type="ECO:0000255" key="1">
    <source>
        <dbReference type="HAMAP-Rule" id="MF_00009"/>
    </source>
</evidence>
<accession>A7N1G7</accession>